<name>MDH_CHLT2</name>
<feature type="chain" id="PRO_1000191616" description="Malate dehydrogenase">
    <location>
        <begin position="1"/>
        <end position="326"/>
    </location>
</feature>
<feature type="active site" description="Proton acceptor" evidence="1">
    <location>
        <position position="188"/>
    </location>
</feature>
<feature type="binding site" evidence="1">
    <location>
        <begin position="12"/>
        <end position="18"/>
    </location>
    <ligand>
        <name>NAD(+)</name>
        <dbReference type="ChEBI" id="CHEBI:57540"/>
    </ligand>
</feature>
<feature type="binding site" evidence="1">
    <location>
        <position position="93"/>
    </location>
    <ligand>
        <name>substrate</name>
    </ligand>
</feature>
<feature type="binding site" evidence="1">
    <location>
        <position position="99"/>
    </location>
    <ligand>
        <name>substrate</name>
    </ligand>
</feature>
<feature type="binding site" evidence="1">
    <location>
        <position position="106"/>
    </location>
    <ligand>
        <name>NAD(+)</name>
        <dbReference type="ChEBI" id="CHEBI:57540"/>
    </ligand>
</feature>
<feature type="binding site" evidence="1">
    <location>
        <position position="113"/>
    </location>
    <ligand>
        <name>NAD(+)</name>
        <dbReference type="ChEBI" id="CHEBI:57540"/>
    </ligand>
</feature>
<feature type="binding site" evidence="1">
    <location>
        <begin position="130"/>
        <end position="132"/>
    </location>
    <ligand>
        <name>NAD(+)</name>
        <dbReference type="ChEBI" id="CHEBI:57540"/>
    </ligand>
</feature>
<feature type="binding site" evidence="1">
    <location>
        <position position="132"/>
    </location>
    <ligand>
        <name>substrate</name>
    </ligand>
</feature>
<feature type="binding site" evidence="1">
    <location>
        <position position="163"/>
    </location>
    <ligand>
        <name>substrate</name>
    </ligand>
</feature>
<evidence type="ECO:0000255" key="1">
    <source>
        <dbReference type="HAMAP-Rule" id="MF_01517"/>
    </source>
</evidence>
<comment type="function">
    <text evidence="1">Catalyzes the reversible oxidation of malate to oxaloacetate.</text>
</comment>
<comment type="catalytic activity">
    <reaction evidence="1">
        <text>(S)-malate + NAD(+) = oxaloacetate + NADH + H(+)</text>
        <dbReference type="Rhea" id="RHEA:21432"/>
        <dbReference type="ChEBI" id="CHEBI:15378"/>
        <dbReference type="ChEBI" id="CHEBI:15589"/>
        <dbReference type="ChEBI" id="CHEBI:16452"/>
        <dbReference type="ChEBI" id="CHEBI:57540"/>
        <dbReference type="ChEBI" id="CHEBI:57945"/>
        <dbReference type="EC" id="1.1.1.37"/>
    </reaction>
</comment>
<comment type="similarity">
    <text evidence="1">Belongs to the LDH/MDH superfamily. MDH type 2 family.</text>
</comment>
<gene>
    <name evidence="1" type="primary">mdh</name>
    <name type="ordered locus">CTL0630</name>
</gene>
<keyword id="KW-0520">NAD</keyword>
<keyword id="KW-0560">Oxidoreductase</keyword>
<keyword id="KW-0816">Tricarboxylic acid cycle</keyword>
<protein>
    <recommendedName>
        <fullName evidence="1">Malate dehydrogenase</fullName>
        <ecNumber evidence="1">1.1.1.37</ecNumber>
    </recommendedName>
</protein>
<organism>
    <name type="scientific">Chlamydia trachomatis serovar L2 (strain ATCC VR-902B / DSM 19102 / 434/Bu)</name>
    <dbReference type="NCBI Taxonomy" id="471472"/>
    <lineage>
        <taxon>Bacteria</taxon>
        <taxon>Pseudomonadati</taxon>
        <taxon>Chlamydiota</taxon>
        <taxon>Chlamydiia</taxon>
        <taxon>Chlamydiales</taxon>
        <taxon>Chlamydiaceae</taxon>
        <taxon>Chlamydia/Chlamydophila group</taxon>
        <taxon>Chlamydia</taxon>
    </lineage>
</organism>
<sequence length="326" mass="35561">MVSQTVSVAVTGGTGQIAYSFLFSLAHGDVFGLDCGIDLRIYDIPGTERALSGVRMELDDGAFPLLQRVQVTTSLHDAFDGIDAAFLIGSVPRGPGMERRDLLKKNGEIVATQGKALNTTAKRDAKIFVVGNPVNTNCWIAMNHAPRLLRKNFHAMLRLDQNRMHSMLSHRAEVPLSAVSQVVVWGNHSAKQVPDFTQALINDRPIAETIADRDWLENIMVPSVQSRGSAVIEARGKSSAASAARALAEAARSIYQPKEGEWFSSGVCSDHNPYGLPEDLIFGFPCRMLATGEYEVIPGLPWDAFIRGKMQISLDEILQEKASVSL</sequence>
<proteinExistence type="inferred from homology"/>
<accession>B0B7U5</accession>
<reference key="1">
    <citation type="journal article" date="2008" name="Genome Res.">
        <title>Chlamydia trachomatis: genome sequence analysis of lymphogranuloma venereum isolates.</title>
        <authorList>
            <person name="Thomson N.R."/>
            <person name="Holden M.T.G."/>
            <person name="Carder C."/>
            <person name="Lennard N."/>
            <person name="Lockey S.J."/>
            <person name="Marsh P."/>
            <person name="Skipp P."/>
            <person name="O'Connor C.D."/>
            <person name="Goodhead I."/>
            <person name="Norbertzcak H."/>
            <person name="Harris B."/>
            <person name="Ormond D."/>
            <person name="Rance R."/>
            <person name="Quail M.A."/>
            <person name="Parkhill J."/>
            <person name="Stephens R.S."/>
            <person name="Clarke I.N."/>
        </authorList>
    </citation>
    <scope>NUCLEOTIDE SEQUENCE [LARGE SCALE GENOMIC DNA]</scope>
    <source>
        <strain>ATCC VR-902B / DSM 19102 / 434/Bu</strain>
    </source>
</reference>
<dbReference type="EC" id="1.1.1.37" evidence="1"/>
<dbReference type="EMBL" id="AM884176">
    <property type="protein sequence ID" value="CAP04071.1"/>
    <property type="molecule type" value="Genomic_DNA"/>
</dbReference>
<dbReference type="RefSeq" id="WP_009873767.1">
    <property type="nucleotide sequence ID" value="NC_010287.1"/>
</dbReference>
<dbReference type="RefSeq" id="YP_001654704.1">
    <property type="nucleotide sequence ID" value="NC_010287.1"/>
</dbReference>
<dbReference type="SMR" id="B0B7U5"/>
<dbReference type="KEGG" id="ctb:CTL0630"/>
<dbReference type="PATRIC" id="fig|471472.4.peg.681"/>
<dbReference type="HOGENOM" id="CLU_040727_2_0_0"/>
<dbReference type="Proteomes" id="UP001154402">
    <property type="component" value="Chromosome"/>
</dbReference>
<dbReference type="GO" id="GO:0030060">
    <property type="term" value="F:L-malate dehydrogenase (NAD+) activity"/>
    <property type="evidence" value="ECO:0007669"/>
    <property type="project" value="UniProtKB-UniRule"/>
</dbReference>
<dbReference type="GO" id="GO:0006108">
    <property type="term" value="P:malate metabolic process"/>
    <property type="evidence" value="ECO:0007669"/>
    <property type="project" value="InterPro"/>
</dbReference>
<dbReference type="GO" id="GO:0006099">
    <property type="term" value="P:tricarboxylic acid cycle"/>
    <property type="evidence" value="ECO:0007669"/>
    <property type="project" value="UniProtKB-UniRule"/>
</dbReference>
<dbReference type="FunFam" id="3.40.50.720:FF:000010">
    <property type="entry name" value="Malate dehydrogenase"/>
    <property type="match status" value="1"/>
</dbReference>
<dbReference type="FunFam" id="3.90.110.10:FF:000002">
    <property type="entry name" value="Malate dehydrogenase"/>
    <property type="match status" value="1"/>
</dbReference>
<dbReference type="Gene3D" id="3.90.110.10">
    <property type="entry name" value="Lactate dehydrogenase/glycoside hydrolase, family 4, C-terminal"/>
    <property type="match status" value="1"/>
</dbReference>
<dbReference type="Gene3D" id="3.40.50.720">
    <property type="entry name" value="NAD(P)-binding Rossmann-like Domain"/>
    <property type="match status" value="1"/>
</dbReference>
<dbReference type="HAMAP" id="MF_01517">
    <property type="entry name" value="Malate_dehydrog_2"/>
    <property type="match status" value="1"/>
</dbReference>
<dbReference type="InterPro" id="IPR001557">
    <property type="entry name" value="L-lactate/malate_DH"/>
</dbReference>
<dbReference type="InterPro" id="IPR022383">
    <property type="entry name" value="Lactate/malate_DH_C"/>
</dbReference>
<dbReference type="InterPro" id="IPR001236">
    <property type="entry name" value="Lactate/malate_DH_N"/>
</dbReference>
<dbReference type="InterPro" id="IPR015955">
    <property type="entry name" value="Lactate_DH/Glyco_Ohase_4_C"/>
</dbReference>
<dbReference type="InterPro" id="IPR010945">
    <property type="entry name" value="Malate_DH_type2"/>
</dbReference>
<dbReference type="InterPro" id="IPR036291">
    <property type="entry name" value="NAD(P)-bd_dom_sf"/>
</dbReference>
<dbReference type="NCBIfam" id="TIGR01759">
    <property type="entry name" value="MalateDH-SF1"/>
    <property type="match status" value="1"/>
</dbReference>
<dbReference type="NCBIfam" id="NF003916">
    <property type="entry name" value="PRK05442.1"/>
    <property type="match status" value="1"/>
</dbReference>
<dbReference type="PANTHER" id="PTHR23382">
    <property type="entry name" value="MALATE DEHYDROGENASE"/>
    <property type="match status" value="1"/>
</dbReference>
<dbReference type="Pfam" id="PF02866">
    <property type="entry name" value="Ldh_1_C"/>
    <property type="match status" value="1"/>
</dbReference>
<dbReference type="Pfam" id="PF00056">
    <property type="entry name" value="Ldh_1_N"/>
    <property type="match status" value="1"/>
</dbReference>
<dbReference type="PIRSF" id="PIRSF000102">
    <property type="entry name" value="Lac_mal_DH"/>
    <property type="match status" value="1"/>
</dbReference>
<dbReference type="SUPFAM" id="SSF56327">
    <property type="entry name" value="LDH C-terminal domain-like"/>
    <property type="match status" value="1"/>
</dbReference>
<dbReference type="SUPFAM" id="SSF51735">
    <property type="entry name" value="NAD(P)-binding Rossmann-fold domains"/>
    <property type="match status" value="1"/>
</dbReference>